<proteinExistence type="evidence at protein level"/>
<evidence type="ECO:0000256" key="1">
    <source>
        <dbReference type="SAM" id="MobiDB-lite"/>
    </source>
</evidence>
<evidence type="ECO:0000269" key="2">
    <source>
    </source>
</evidence>
<evidence type="ECO:0000269" key="3">
    <source>
    </source>
</evidence>
<evidence type="ECO:0000303" key="4">
    <source>
    </source>
</evidence>
<evidence type="ECO:0000305" key="5"/>
<evidence type="ECO:0000305" key="6">
    <source>
    </source>
</evidence>
<evidence type="ECO:0000312" key="7">
    <source>
        <dbReference type="EMBL" id="AFY23231.1"/>
    </source>
</evidence>
<name>DVNP5_HEMSX</name>
<accession>K9NVA6</accession>
<organism>
    <name type="scientific">Hematodinium sp</name>
    <dbReference type="NCBI Taxonomy" id="173654"/>
    <lineage>
        <taxon>Eukaryota</taxon>
        <taxon>Sar</taxon>
        <taxon>Alveolata</taxon>
        <taxon>Dinophyceae</taxon>
        <taxon>Syndiniales</taxon>
        <taxon>Syndiniaceae</taxon>
        <taxon>Hematodinium</taxon>
    </lineage>
</organism>
<reference evidence="7" key="1">
    <citation type="journal article" date="2012" name="Curr. Biol.">
        <title>Loss of nucleosomal DNA condensation coincides with appearance of a novel nuclear protein in dinoflagellates.</title>
        <authorList>
            <person name="Gornik S.G."/>
            <person name="Ford K.L."/>
            <person name="Mulhern T.D."/>
            <person name="Bacic A."/>
            <person name="McFadden G.I."/>
            <person name="Waller R.F."/>
        </authorList>
    </citation>
    <scope>NUCLEOTIDE SEQUENCE [MRNA]</scope>
    <scope>FUNCTION</scope>
    <scope>SUBCELLULAR LOCATION</scope>
    <scope>PHOSPHORYLATION</scope>
</reference>
<reference evidence="5" key="2">
    <citation type="journal article" date="2018" name="Nat. Commun.">
        <title>Viral proteins as a potential driver of histone depletion in dinoflagellates.</title>
        <authorList>
            <person name="Irwin N.A.T."/>
            <person name="Martin B.J.E."/>
            <person name="Young B.P."/>
            <person name="Browne M.J.G."/>
            <person name="Flaus A."/>
            <person name="Loewen C.J.R."/>
            <person name="Keeling P.J."/>
            <person name="Howe L.J."/>
        </authorList>
    </citation>
    <scope>FUNCTION</scope>
    <scope>SUBCELLULAR LOCATION</scope>
</reference>
<comment type="function">
    <text evidence="3 6">DNA-binding protein, which similarly to histones, may compact DNA into chromatin.</text>
</comment>
<comment type="subcellular location">
    <subcellularLocation>
        <location evidence="2 3">Nucleus</location>
    </subcellularLocation>
    <subcellularLocation>
        <location evidence="2">Chromosome</location>
    </subcellularLocation>
    <text evidence="2 3">Localizes to condensed chromosomes (PubMed:23159597). Localizes upstream and downstream of transcription start sites of chromatin (PubMed:29670105).</text>
</comment>
<comment type="PTM">
    <text evidence="2">Phosphorylated.</text>
</comment>
<comment type="miscellaneous">
    <text evidence="3">In yeast, DVNP5 binds to histone binding sites in chromatin and displaces nucleosomes, and impairs transcription and inhibits cell growth.</text>
</comment>
<sequence length="132" mass="14359">MAAMKKAMKVKKSAKKSAKKSGKKGGMKKKAKRVSKVARGKRAKSSVFRGTKERTSGGLTKNSLVKNKQGRVVSKKQSEHGKKIFKKHGLQKWIDAVTKARKALGIKGFQAVGGSSAKGKILLAKSRSFYKK</sequence>
<dbReference type="EMBL" id="JX839700">
    <property type="protein sequence ID" value="AFY23231.1"/>
    <property type="molecule type" value="mRNA"/>
</dbReference>
<dbReference type="SMR" id="K9NVA6"/>
<dbReference type="GO" id="GO:0005694">
    <property type="term" value="C:chromosome"/>
    <property type="evidence" value="ECO:0000314"/>
    <property type="project" value="UniProtKB"/>
</dbReference>
<dbReference type="GO" id="GO:0005634">
    <property type="term" value="C:nucleus"/>
    <property type="evidence" value="ECO:0000314"/>
    <property type="project" value="UniProtKB"/>
</dbReference>
<dbReference type="GO" id="GO:0003677">
    <property type="term" value="F:DNA binding"/>
    <property type="evidence" value="ECO:0000314"/>
    <property type="project" value="UniProtKB"/>
</dbReference>
<dbReference type="GO" id="GO:0030261">
    <property type="term" value="P:chromosome condensation"/>
    <property type="evidence" value="ECO:0007669"/>
    <property type="project" value="UniProtKB-KW"/>
</dbReference>
<dbReference type="InterPro" id="IPR043928">
    <property type="entry name" value="DNVP"/>
</dbReference>
<dbReference type="Pfam" id="PF19060">
    <property type="entry name" value="DVNP"/>
    <property type="match status" value="1"/>
</dbReference>
<feature type="chain" id="PRO_0000450801" description="Dinoflagellate viral nucleoprotein 5">
    <location>
        <begin position="1"/>
        <end position="132"/>
    </location>
</feature>
<feature type="region of interest" description="Disordered" evidence="1">
    <location>
        <begin position="1"/>
        <end position="84"/>
    </location>
</feature>
<feature type="compositionally biased region" description="Basic residues" evidence="1">
    <location>
        <begin position="1"/>
        <end position="44"/>
    </location>
</feature>
<feature type="compositionally biased region" description="Polar residues" evidence="1">
    <location>
        <begin position="57"/>
        <end position="66"/>
    </location>
</feature>
<keyword id="KW-0158">Chromosome</keyword>
<keyword id="KW-0226">DNA condensation</keyword>
<keyword id="KW-0238">DNA-binding</keyword>
<keyword id="KW-0539">Nucleus</keyword>
<keyword id="KW-0597">Phosphoprotein</keyword>
<protein>
    <recommendedName>
        <fullName evidence="4">Dinoflagellate viral nucleoprotein 5</fullName>
        <shortName evidence="4">DNVP5</shortName>
    </recommendedName>
</protein>